<gene>
    <name evidence="1" type="primary">pdxA</name>
    <name type="ordered locus">AZOSEA05990</name>
    <name type="ORF">ebA1139</name>
</gene>
<feature type="chain" id="PRO_1000051490" description="4-hydroxythreonine-4-phosphate dehydrogenase">
    <location>
        <begin position="1"/>
        <end position="326"/>
    </location>
</feature>
<feature type="binding site" evidence="1">
    <location>
        <position position="130"/>
    </location>
    <ligand>
        <name>substrate</name>
    </ligand>
</feature>
<feature type="binding site" evidence="1">
    <location>
        <position position="131"/>
    </location>
    <ligand>
        <name>substrate</name>
    </ligand>
</feature>
<feature type="binding site" evidence="1">
    <location>
        <position position="160"/>
    </location>
    <ligand>
        <name>a divalent metal cation</name>
        <dbReference type="ChEBI" id="CHEBI:60240"/>
        <note>ligand shared between dimeric partners</note>
    </ligand>
</feature>
<feature type="binding site" evidence="1">
    <location>
        <position position="205"/>
    </location>
    <ligand>
        <name>a divalent metal cation</name>
        <dbReference type="ChEBI" id="CHEBI:60240"/>
        <note>ligand shared between dimeric partners</note>
    </ligand>
</feature>
<feature type="binding site" evidence="1">
    <location>
        <position position="260"/>
    </location>
    <ligand>
        <name>a divalent metal cation</name>
        <dbReference type="ChEBI" id="CHEBI:60240"/>
        <note>ligand shared between dimeric partners</note>
    </ligand>
</feature>
<feature type="binding site" evidence="1">
    <location>
        <position position="268"/>
    </location>
    <ligand>
        <name>substrate</name>
    </ligand>
</feature>
<feature type="binding site" evidence="1">
    <location>
        <position position="277"/>
    </location>
    <ligand>
        <name>substrate</name>
    </ligand>
</feature>
<feature type="binding site" evidence="1">
    <location>
        <position position="286"/>
    </location>
    <ligand>
        <name>substrate</name>
    </ligand>
</feature>
<sequence>MASLPILAITSGEPAGIGPELCAQLSRRDWPLRPVVLGDFELIRARAAGAAVVRAYMPDAPAAAGVLDVLHVPLNVAARPGRLDPANAGYVLALLDRAVHGCRSGEFGAIVTAPVHKGVINDAGVAFSGHTEYLAEHTGTPRVVMMLVGGGLRVALATTHLPLAAVPGAITPALLDETLRILHADLAGRFGLAAPRILVAGLNPHAGEGGHMGREEIDVIAPVLERLRGEGMRLVGPLPADTLFVPHTLGQGDAVLAMYHDQGLPVLKHASFGGGVNVTLGLPIIRTSVDHGTALDLAGTGRADPGSLFAAVELATAMVCNRDVAR</sequence>
<dbReference type="EC" id="1.1.1.262" evidence="1"/>
<dbReference type="EMBL" id="CR555306">
    <property type="protein sequence ID" value="CAI06721.1"/>
    <property type="molecule type" value="Genomic_DNA"/>
</dbReference>
<dbReference type="RefSeq" id="WP_011236451.1">
    <property type="nucleotide sequence ID" value="NC_006513.1"/>
</dbReference>
<dbReference type="SMR" id="Q5P7J0"/>
<dbReference type="STRING" id="76114.ebA1139"/>
<dbReference type="KEGG" id="eba:ebA1139"/>
<dbReference type="eggNOG" id="COG1995">
    <property type="taxonomic scope" value="Bacteria"/>
</dbReference>
<dbReference type="HOGENOM" id="CLU_040168_1_0_4"/>
<dbReference type="OrthoDB" id="9801783at2"/>
<dbReference type="UniPathway" id="UPA00244">
    <property type="reaction ID" value="UER00312"/>
</dbReference>
<dbReference type="Proteomes" id="UP000006552">
    <property type="component" value="Chromosome"/>
</dbReference>
<dbReference type="GO" id="GO:0005737">
    <property type="term" value="C:cytoplasm"/>
    <property type="evidence" value="ECO:0007669"/>
    <property type="project" value="UniProtKB-SubCell"/>
</dbReference>
<dbReference type="GO" id="GO:0050570">
    <property type="term" value="F:4-hydroxythreonine-4-phosphate dehydrogenase activity"/>
    <property type="evidence" value="ECO:0007669"/>
    <property type="project" value="UniProtKB-UniRule"/>
</dbReference>
<dbReference type="GO" id="GO:0050897">
    <property type="term" value="F:cobalt ion binding"/>
    <property type="evidence" value="ECO:0007669"/>
    <property type="project" value="UniProtKB-UniRule"/>
</dbReference>
<dbReference type="GO" id="GO:0000287">
    <property type="term" value="F:magnesium ion binding"/>
    <property type="evidence" value="ECO:0007669"/>
    <property type="project" value="UniProtKB-UniRule"/>
</dbReference>
<dbReference type="GO" id="GO:0051287">
    <property type="term" value="F:NAD binding"/>
    <property type="evidence" value="ECO:0007669"/>
    <property type="project" value="InterPro"/>
</dbReference>
<dbReference type="GO" id="GO:0008270">
    <property type="term" value="F:zinc ion binding"/>
    <property type="evidence" value="ECO:0007669"/>
    <property type="project" value="UniProtKB-UniRule"/>
</dbReference>
<dbReference type="GO" id="GO:0042823">
    <property type="term" value="P:pyridoxal phosphate biosynthetic process"/>
    <property type="evidence" value="ECO:0007669"/>
    <property type="project" value="UniProtKB-UniRule"/>
</dbReference>
<dbReference type="GO" id="GO:0008615">
    <property type="term" value="P:pyridoxine biosynthetic process"/>
    <property type="evidence" value="ECO:0007669"/>
    <property type="project" value="UniProtKB-UniRule"/>
</dbReference>
<dbReference type="Gene3D" id="3.40.718.10">
    <property type="entry name" value="Isopropylmalate Dehydrogenase"/>
    <property type="match status" value="1"/>
</dbReference>
<dbReference type="HAMAP" id="MF_00536">
    <property type="entry name" value="PdxA"/>
    <property type="match status" value="1"/>
</dbReference>
<dbReference type="InterPro" id="IPR037510">
    <property type="entry name" value="PdxA"/>
</dbReference>
<dbReference type="InterPro" id="IPR005255">
    <property type="entry name" value="PdxA_fam"/>
</dbReference>
<dbReference type="NCBIfam" id="TIGR00557">
    <property type="entry name" value="pdxA"/>
    <property type="match status" value="1"/>
</dbReference>
<dbReference type="PANTHER" id="PTHR30004">
    <property type="entry name" value="4-HYDROXYTHREONINE-4-PHOSPHATE DEHYDROGENASE"/>
    <property type="match status" value="1"/>
</dbReference>
<dbReference type="PANTHER" id="PTHR30004:SF5">
    <property type="entry name" value="4-HYDROXYTHREONINE-4-PHOSPHATE DEHYDROGENASE"/>
    <property type="match status" value="1"/>
</dbReference>
<dbReference type="Pfam" id="PF04166">
    <property type="entry name" value="PdxA"/>
    <property type="match status" value="1"/>
</dbReference>
<dbReference type="SUPFAM" id="SSF53659">
    <property type="entry name" value="Isocitrate/Isopropylmalate dehydrogenase-like"/>
    <property type="match status" value="1"/>
</dbReference>
<comment type="function">
    <text evidence="1">Catalyzes the NAD(P)-dependent oxidation of 4-(phosphooxy)-L-threonine (HTP) into 2-amino-3-oxo-4-(phosphooxy)butyric acid which spontaneously decarboxylates to form 3-amino-2-oxopropyl phosphate (AHAP).</text>
</comment>
<comment type="catalytic activity">
    <reaction evidence="1">
        <text>4-(phosphooxy)-L-threonine + NAD(+) = 3-amino-2-oxopropyl phosphate + CO2 + NADH</text>
        <dbReference type="Rhea" id="RHEA:32275"/>
        <dbReference type="ChEBI" id="CHEBI:16526"/>
        <dbReference type="ChEBI" id="CHEBI:57279"/>
        <dbReference type="ChEBI" id="CHEBI:57540"/>
        <dbReference type="ChEBI" id="CHEBI:57945"/>
        <dbReference type="ChEBI" id="CHEBI:58452"/>
        <dbReference type="EC" id="1.1.1.262"/>
    </reaction>
</comment>
<comment type="cofactor">
    <cofactor evidence="1">
        <name>Zn(2+)</name>
        <dbReference type="ChEBI" id="CHEBI:29105"/>
    </cofactor>
    <cofactor evidence="1">
        <name>Mg(2+)</name>
        <dbReference type="ChEBI" id="CHEBI:18420"/>
    </cofactor>
    <cofactor evidence="1">
        <name>Co(2+)</name>
        <dbReference type="ChEBI" id="CHEBI:48828"/>
    </cofactor>
    <text evidence="1">Binds 1 divalent metal cation per subunit. Can use ions such as Zn(2+), Mg(2+) or Co(2+).</text>
</comment>
<comment type="pathway">
    <text evidence="1">Cofactor biosynthesis; pyridoxine 5'-phosphate biosynthesis; pyridoxine 5'-phosphate from D-erythrose 4-phosphate: step 4/5.</text>
</comment>
<comment type="subunit">
    <text evidence="1">Homodimer.</text>
</comment>
<comment type="subcellular location">
    <subcellularLocation>
        <location evidence="1">Cytoplasm</location>
    </subcellularLocation>
</comment>
<comment type="miscellaneous">
    <text evidence="1">The active site is located at the dimer interface.</text>
</comment>
<comment type="similarity">
    <text evidence="1">Belongs to the PdxA family.</text>
</comment>
<keyword id="KW-0170">Cobalt</keyword>
<keyword id="KW-0963">Cytoplasm</keyword>
<keyword id="KW-0460">Magnesium</keyword>
<keyword id="KW-0479">Metal-binding</keyword>
<keyword id="KW-0520">NAD</keyword>
<keyword id="KW-0521">NADP</keyword>
<keyword id="KW-0560">Oxidoreductase</keyword>
<keyword id="KW-0664">Pyridoxine biosynthesis</keyword>
<keyword id="KW-1185">Reference proteome</keyword>
<keyword id="KW-0862">Zinc</keyword>
<reference key="1">
    <citation type="journal article" date="2005" name="Arch. Microbiol.">
        <title>The genome sequence of an anaerobic aromatic-degrading denitrifying bacterium, strain EbN1.</title>
        <authorList>
            <person name="Rabus R."/>
            <person name="Kube M."/>
            <person name="Heider J."/>
            <person name="Beck A."/>
            <person name="Heitmann K."/>
            <person name="Widdel F."/>
            <person name="Reinhardt R."/>
        </authorList>
    </citation>
    <scope>NUCLEOTIDE SEQUENCE [LARGE SCALE GENOMIC DNA]</scope>
    <source>
        <strain>DSM 19018 / LMG 30748 / EbN1</strain>
    </source>
</reference>
<evidence type="ECO:0000255" key="1">
    <source>
        <dbReference type="HAMAP-Rule" id="MF_00536"/>
    </source>
</evidence>
<name>PDXA_AROAE</name>
<proteinExistence type="inferred from homology"/>
<organism>
    <name type="scientific">Aromatoleum aromaticum (strain DSM 19018 / LMG 30748 / EbN1)</name>
    <name type="common">Azoarcus sp. (strain EbN1)</name>
    <dbReference type="NCBI Taxonomy" id="76114"/>
    <lineage>
        <taxon>Bacteria</taxon>
        <taxon>Pseudomonadati</taxon>
        <taxon>Pseudomonadota</taxon>
        <taxon>Betaproteobacteria</taxon>
        <taxon>Rhodocyclales</taxon>
        <taxon>Rhodocyclaceae</taxon>
        <taxon>Aromatoleum</taxon>
    </lineage>
</organism>
<accession>Q5P7J0</accession>
<protein>
    <recommendedName>
        <fullName evidence="1">4-hydroxythreonine-4-phosphate dehydrogenase</fullName>
        <ecNumber evidence="1">1.1.1.262</ecNumber>
    </recommendedName>
    <alternativeName>
        <fullName evidence="1">4-(phosphohydroxy)-L-threonine dehydrogenase</fullName>
    </alternativeName>
</protein>